<evidence type="ECO:0000255" key="1"/>
<evidence type="ECO:0000269" key="2">
    <source>
    </source>
</evidence>
<evidence type="ECO:0000269" key="3">
    <source>
    </source>
</evidence>
<evidence type="ECO:0000303" key="4">
    <source>
    </source>
</evidence>
<evidence type="ECO:0000305" key="5"/>
<evidence type="ECO:0000312" key="6">
    <source>
        <dbReference type="Araport" id="AT5G19380"/>
    </source>
</evidence>
<evidence type="ECO:0000312" key="7">
    <source>
        <dbReference type="EMBL" id="ABJ17107.1"/>
    </source>
</evidence>
<evidence type="ECO:0000312" key="8">
    <source>
        <dbReference type="EMBL" id="AF296837"/>
    </source>
</evidence>
<protein>
    <recommendedName>
        <fullName evidence="4">Protein CLT1, chloroplastic</fullName>
    </recommendedName>
    <alternativeName>
        <fullName evidence="4">CRT-like transporter 1</fullName>
    </alternativeName>
    <alternativeName>
        <fullName evidence="4">Chloroquine-resistance transporter-like transporter 1</fullName>
    </alternativeName>
</protein>
<keyword id="KW-0025">Alternative splicing</keyword>
<keyword id="KW-0150">Chloroplast</keyword>
<keyword id="KW-0472">Membrane</keyword>
<keyword id="KW-0934">Plastid</keyword>
<keyword id="KW-1185">Reference proteome</keyword>
<keyword id="KW-0809">Transit peptide</keyword>
<keyword id="KW-0812">Transmembrane</keyword>
<keyword id="KW-1133">Transmembrane helix</keyword>
<keyword id="KW-0813">Transport</keyword>
<feature type="transit peptide" description="Chloroplast" evidence="1">
    <location>
        <begin position="1"/>
        <end position="48"/>
    </location>
</feature>
<feature type="chain" id="PRO_0000433246" description="Protein CLT1, chloroplastic" evidence="1">
    <location>
        <begin position="49"/>
        <end position="447"/>
    </location>
</feature>
<feature type="transmembrane region" description="Helical" evidence="1">
    <location>
        <begin position="103"/>
        <end position="123"/>
    </location>
</feature>
<feature type="transmembrane region" description="Helical" evidence="1">
    <location>
        <begin position="135"/>
        <end position="155"/>
    </location>
</feature>
<feature type="transmembrane region" description="Helical" evidence="1">
    <location>
        <begin position="172"/>
        <end position="192"/>
    </location>
</feature>
<feature type="transmembrane region" description="Helical" evidence="1">
    <location>
        <begin position="200"/>
        <end position="220"/>
    </location>
</feature>
<feature type="transmembrane region" description="Helical" evidence="1">
    <location>
        <begin position="228"/>
        <end position="248"/>
    </location>
</feature>
<feature type="transmembrane region" description="Helical" evidence="1">
    <location>
        <begin position="256"/>
        <end position="276"/>
    </location>
</feature>
<feature type="transmembrane region" description="Helical" evidence="1">
    <location>
        <begin position="304"/>
        <end position="324"/>
    </location>
</feature>
<feature type="transmembrane region" description="Helical" evidence="1">
    <location>
        <begin position="351"/>
        <end position="371"/>
    </location>
</feature>
<feature type="transmembrane region" description="Helical" evidence="1">
    <location>
        <begin position="387"/>
        <end position="407"/>
    </location>
</feature>
<feature type="transmembrane region" description="Helical" evidence="1">
    <location>
        <begin position="413"/>
        <end position="433"/>
    </location>
</feature>
<dbReference type="EMBL" id="AF296837">
    <property type="status" value="NOT_ANNOTATED_CDS"/>
    <property type="molecule type" value="Genomic_DNA"/>
</dbReference>
<dbReference type="EMBL" id="CP002688">
    <property type="protein sequence ID" value="AED92693.1"/>
    <property type="molecule type" value="Genomic_DNA"/>
</dbReference>
<dbReference type="EMBL" id="BT029172">
    <property type="protein sequence ID" value="ABJ17107.1"/>
    <property type="molecule type" value="mRNA"/>
</dbReference>
<dbReference type="RefSeq" id="NP_568373.1">
    <molecule id="Q058P6-1"/>
    <property type="nucleotide sequence ID" value="NM_121943.3"/>
</dbReference>
<dbReference type="SMR" id="Q058P6"/>
<dbReference type="FunCoup" id="Q058P6">
    <property type="interactions" value="33"/>
</dbReference>
<dbReference type="STRING" id="3702.Q058P6"/>
<dbReference type="TCDB" id="2.A.7.20.4">
    <property type="family name" value="the drug/metabolite transporter (dmt) superfamily"/>
</dbReference>
<dbReference type="GlyGen" id="Q058P6">
    <property type="glycosylation" value="1 site"/>
</dbReference>
<dbReference type="ProteomicsDB" id="240984">
    <molecule id="Q058P6-1"/>
</dbReference>
<dbReference type="EnsemblPlants" id="AT5G19380.1">
    <molecule id="Q058P6-1"/>
    <property type="protein sequence ID" value="AT5G19380.1"/>
    <property type="gene ID" value="AT5G19380"/>
</dbReference>
<dbReference type="GeneID" id="832058"/>
<dbReference type="Gramene" id="AT5G19380.1">
    <molecule id="Q058P6-1"/>
    <property type="protein sequence ID" value="AT5G19380.1"/>
    <property type="gene ID" value="AT5G19380"/>
</dbReference>
<dbReference type="KEGG" id="ath:AT5G19380"/>
<dbReference type="Araport" id="AT5G19380"/>
<dbReference type="TAIR" id="AT5G19380">
    <property type="gene designation" value="CLT1"/>
</dbReference>
<dbReference type="eggNOG" id="ENOG502QR5M">
    <property type="taxonomic scope" value="Eukaryota"/>
</dbReference>
<dbReference type="InParanoid" id="Q058P6"/>
<dbReference type="OMA" id="IWTVRIK"/>
<dbReference type="OrthoDB" id="416555at2759"/>
<dbReference type="PhylomeDB" id="Q058P6"/>
<dbReference type="PRO" id="PR:Q058P6"/>
<dbReference type="Proteomes" id="UP000006548">
    <property type="component" value="Chromosome 5"/>
</dbReference>
<dbReference type="ExpressionAtlas" id="Q058P6">
    <property type="expression patterns" value="baseline and differential"/>
</dbReference>
<dbReference type="GO" id="GO:0031969">
    <property type="term" value="C:chloroplast membrane"/>
    <property type="evidence" value="ECO:0007669"/>
    <property type="project" value="UniProtKB-SubCell"/>
</dbReference>
<dbReference type="InterPro" id="IPR013936">
    <property type="entry name" value="CRT-like"/>
</dbReference>
<dbReference type="PANTHER" id="PTHR31326:SF12">
    <property type="entry name" value="PROTEIN CLT1, CHLOROPLASTIC"/>
    <property type="match status" value="1"/>
</dbReference>
<dbReference type="PANTHER" id="PTHR31326">
    <property type="entry name" value="PROTEIN CLT2, CHLOROPLASTIC"/>
    <property type="match status" value="1"/>
</dbReference>
<dbReference type="Pfam" id="PF08627">
    <property type="entry name" value="CRT-like"/>
    <property type="match status" value="1"/>
</dbReference>
<dbReference type="SUPFAM" id="SSF103481">
    <property type="entry name" value="Multidrug resistance efflux transporter EmrE"/>
    <property type="match status" value="1"/>
</dbReference>
<gene>
    <name evidence="4" type="primary">CLT1</name>
    <name evidence="6" type="ordered locus">At5g19380</name>
    <name evidence="8" type="ORF">F7K24.130</name>
</gene>
<comment type="function">
    <text evidence="2">Involved in thiol transport from the plastid to the cytosol. Transports probably both glutathione (GSH) and its precursor, gamma-glutamylcysteine (gamma-EC). Exhibits some functional redundancy with CLT3 in maintaining the root GSH pool.</text>
</comment>
<comment type="subcellular location">
    <subcellularLocation>
        <location evidence="2">Plastid</location>
        <location evidence="2">Chloroplast membrane</location>
        <topology evidence="1">Multi-pass membrane protein</topology>
    </subcellularLocation>
</comment>
<comment type="alternative products">
    <event type="alternative splicing"/>
    <isoform>
        <id>Q058P6-1</id>
        <name>1</name>
        <sequence type="displayed"/>
    </isoform>
    <text evidence="5">A number of isoforms are produced.</text>
</comment>
<comment type="disruption phenotype">
    <text evidence="2 3">No visible phenotype, but resistance to L-buthionine-SR-sulfoximine (BSO), an inhibitor of GSH1. Clt1, clt3 and clt3 triple mutants are more sensitive to Cd(2+), have a decreased level of cytosolic GSH, an altered systemic acquired resistance response and are more sensitive to Phytophthora infection (PubMed:20080670). Clt1, clt3 and clt3 triple mutants have decreased lateral root densities (PubMed:24204368).</text>
</comment>
<comment type="similarity">
    <text evidence="5">Belongs to the CRT-like transporter family.</text>
</comment>
<accession>Q058P6</accession>
<name>CLT1_ARATH</name>
<proteinExistence type="evidence at transcript level"/>
<sequence length="447" mass="47925">MATTSSDRLIAGLTASIGSIESRYANPAQSVSLICRNQINGAPPIVLRSSRRSRLWLIEAIPPAKSWNGSNDGDEDIKKSDTRNYAIGGTGGHAVAGKDDRTMEIVIAAATTAALGVGNRVLYKLALIPLKQYPFFLAQLSTFGYVAVYFSILYFRYRAGIVTKEMLSVPKLPFLIVGVLESLALAAGMAAASNLSGPSTTVLSQTFLVWQILFSIIFLGRRYRINQILGCTLVAFGVIVSVASGSGAAHSFKDTGILWSLLMVFSFLLQGADTVMKEVIFLDSKKRLKGASLDLFVVNSYGSIFQVICIALLLPFLSKLWGIPFNQLPSYIRDGGACFLNIGSRITGCEGAPLLPVMFVMMNMAYNISLLRLIKISSAVVSSLASTVSVPIAVYCFTLPLPYLGVASTLPRGFVAGTIILVVGMLLYAWTPSTNTSDSIIPSPPST</sequence>
<organism evidence="7">
    <name type="scientific">Arabidopsis thaliana</name>
    <name type="common">Mouse-ear cress</name>
    <dbReference type="NCBI Taxonomy" id="3702"/>
    <lineage>
        <taxon>Eukaryota</taxon>
        <taxon>Viridiplantae</taxon>
        <taxon>Streptophyta</taxon>
        <taxon>Embryophyta</taxon>
        <taxon>Tracheophyta</taxon>
        <taxon>Spermatophyta</taxon>
        <taxon>Magnoliopsida</taxon>
        <taxon>eudicotyledons</taxon>
        <taxon>Gunneridae</taxon>
        <taxon>Pentapetalae</taxon>
        <taxon>rosids</taxon>
        <taxon>malvids</taxon>
        <taxon>Brassicales</taxon>
        <taxon>Brassicaceae</taxon>
        <taxon>Camelineae</taxon>
        <taxon>Arabidopsis</taxon>
    </lineage>
</organism>
<reference key="1">
    <citation type="journal article" date="2000" name="Nature">
        <title>Sequence and analysis of chromosome 5 of the plant Arabidopsis thaliana.</title>
        <authorList>
            <person name="Tabata S."/>
            <person name="Kaneko T."/>
            <person name="Nakamura Y."/>
            <person name="Kotani H."/>
            <person name="Kato T."/>
            <person name="Asamizu E."/>
            <person name="Miyajima N."/>
            <person name="Sasamoto S."/>
            <person name="Kimura T."/>
            <person name="Hosouchi T."/>
            <person name="Kawashima K."/>
            <person name="Kohara M."/>
            <person name="Matsumoto M."/>
            <person name="Matsuno A."/>
            <person name="Muraki A."/>
            <person name="Nakayama S."/>
            <person name="Nakazaki N."/>
            <person name="Naruo K."/>
            <person name="Okumura S."/>
            <person name="Shinpo S."/>
            <person name="Takeuchi C."/>
            <person name="Wada T."/>
            <person name="Watanabe A."/>
            <person name="Yamada M."/>
            <person name="Yasuda M."/>
            <person name="Sato S."/>
            <person name="de la Bastide M."/>
            <person name="Huang E."/>
            <person name="Spiegel L."/>
            <person name="Gnoj L."/>
            <person name="O'Shaughnessy A."/>
            <person name="Preston R."/>
            <person name="Habermann K."/>
            <person name="Murray J."/>
            <person name="Johnson D."/>
            <person name="Rohlfing T."/>
            <person name="Nelson J."/>
            <person name="Stoneking T."/>
            <person name="Pepin K."/>
            <person name="Spieth J."/>
            <person name="Sekhon M."/>
            <person name="Armstrong J."/>
            <person name="Becker M."/>
            <person name="Belter E."/>
            <person name="Cordum H."/>
            <person name="Cordes M."/>
            <person name="Courtney L."/>
            <person name="Courtney W."/>
            <person name="Dante M."/>
            <person name="Du H."/>
            <person name="Edwards J."/>
            <person name="Fryman J."/>
            <person name="Haakensen B."/>
            <person name="Lamar E."/>
            <person name="Latreille P."/>
            <person name="Leonard S."/>
            <person name="Meyer R."/>
            <person name="Mulvaney E."/>
            <person name="Ozersky P."/>
            <person name="Riley A."/>
            <person name="Strowmatt C."/>
            <person name="Wagner-McPherson C."/>
            <person name="Wollam A."/>
            <person name="Yoakum M."/>
            <person name="Bell M."/>
            <person name="Dedhia N."/>
            <person name="Parnell L."/>
            <person name="Shah R."/>
            <person name="Rodriguez M."/>
            <person name="Hoon See L."/>
            <person name="Vil D."/>
            <person name="Baker J."/>
            <person name="Kirchoff K."/>
            <person name="Toth K."/>
            <person name="King L."/>
            <person name="Bahret A."/>
            <person name="Miller B."/>
            <person name="Marra M.A."/>
            <person name="Martienssen R."/>
            <person name="McCombie W.R."/>
            <person name="Wilson R.K."/>
            <person name="Murphy G."/>
            <person name="Bancroft I."/>
            <person name="Volckaert G."/>
            <person name="Wambutt R."/>
            <person name="Duesterhoeft A."/>
            <person name="Stiekema W."/>
            <person name="Pohl T."/>
            <person name="Entian K.-D."/>
            <person name="Terryn N."/>
            <person name="Hartley N."/>
            <person name="Bent E."/>
            <person name="Johnson S."/>
            <person name="Langham S.-A."/>
            <person name="McCullagh B."/>
            <person name="Robben J."/>
            <person name="Grymonprez B."/>
            <person name="Zimmermann W."/>
            <person name="Ramsperger U."/>
            <person name="Wedler H."/>
            <person name="Balke K."/>
            <person name="Wedler E."/>
            <person name="Peters S."/>
            <person name="van Staveren M."/>
            <person name="Dirkse W."/>
            <person name="Mooijman P."/>
            <person name="Klein Lankhorst R."/>
            <person name="Weitzenegger T."/>
            <person name="Bothe G."/>
            <person name="Rose M."/>
            <person name="Hauf J."/>
            <person name="Berneiser S."/>
            <person name="Hempel S."/>
            <person name="Feldpausch M."/>
            <person name="Lamberth S."/>
            <person name="Villarroel R."/>
            <person name="Gielen J."/>
            <person name="Ardiles W."/>
            <person name="Bents O."/>
            <person name="Lemcke K."/>
            <person name="Kolesov G."/>
            <person name="Mayer K.F.X."/>
            <person name="Rudd S."/>
            <person name="Schoof H."/>
            <person name="Schueller C."/>
            <person name="Zaccaria P."/>
            <person name="Mewes H.-W."/>
            <person name="Bevan M."/>
            <person name="Fransz P.F."/>
        </authorList>
    </citation>
    <scope>NUCLEOTIDE SEQUENCE [LARGE SCALE GENOMIC DNA]</scope>
    <source>
        <strain>cv. Columbia</strain>
    </source>
</reference>
<reference key="2">
    <citation type="journal article" date="2017" name="Plant J.">
        <title>Araport11: a complete reannotation of the Arabidopsis thaliana reference genome.</title>
        <authorList>
            <person name="Cheng C.Y."/>
            <person name="Krishnakumar V."/>
            <person name="Chan A.P."/>
            <person name="Thibaud-Nissen F."/>
            <person name="Schobel S."/>
            <person name="Town C.D."/>
        </authorList>
    </citation>
    <scope>GENOME REANNOTATION</scope>
    <source>
        <strain>cv. Columbia</strain>
    </source>
</reference>
<reference key="3">
    <citation type="submission" date="2006-10" db="EMBL/GenBank/DDBJ databases">
        <title>Arabidopsis ORF Clone.</title>
        <authorList>
            <person name="Bautista V.R."/>
            <person name="Kim C.J."/>
            <person name="Chen H."/>
            <person name="Quinitio C."/>
            <person name="Ecker J.R."/>
        </authorList>
    </citation>
    <scope>NUCLEOTIDE SEQUENCE [LARGE SCALE MRNA]</scope>
    <source>
        <strain>cv. Columbia</strain>
    </source>
</reference>
<reference key="4">
    <citation type="journal article" date="2010" name="Proc. Natl. Acad. Sci. U.S.A.">
        <title>Plant homologs of the Plasmodium falciparum chloroquine-resistance transporter, PfCRT, are required for glutathione homeostasis and stress responses.</title>
        <authorList>
            <person name="Maughan S.C."/>
            <person name="Pasternak M."/>
            <person name="Cairns N."/>
            <person name="Kiddle G."/>
            <person name="Brach T."/>
            <person name="Jarvis R."/>
            <person name="Haas F."/>
            <person name="Nieuwland J."/>
            <person name="Lim B."/>
            <person name="Muller C."/>
            <person name="Salcedo-Sora E."/>
            <person name="Kruse C."/>
            <person name="Orsel M."/>
            <person name="Hell R."/>
            <person name="Miller A.J."/>
            <person name="Bray P."/>
            <person name="Foyer C.H."/>
            <person name="Murray J.A."/>
            <person name="Meyer A.J."/>
            <person name="Cobbett C.S."/>
        </authorList>
    </citation>
    <scope>FUNCTION</scope>
    <scope>DISRUPTION PHENOTYPE</scope>
    <scope>SUBCELLULAR LOCATION</scope>
</reference>
<reference key="5">
    <citation type="journal article" date="2013" name="Front. Plant Sci.">
        <title>A phenomics approach to the analysis of the influence of glutathione on leaf area and abiotic stress tolerance in Arabidopsis thaliana.</title>
        <authorList>
            <person name="Schnaubelt D."/>
            <person name="Schulz P."/>
            <person name="Hannah M.A."/>
            <person name="Yocgo R.E."/>
            <person name="Foyer C.H."/>
        </authorList>
    </citation>
    <scope>DISRUPTION PHENOTYPE</scope>
</reference>